<evidence type="ECO:0000255" key="1"/>
<evidence type="ECO:0000256" key="2">
    <source>
        <dbReference type="SAM" id="MobiDB-lite"/>
    </source>
</evidence>
<evidence type="ECO:0000303" key="3">
    <source>
    </source>
</evidence>
<evidence type="ECO:0000305" key="4"/>
<evidence type="ECO:0000312" key="5">
    <source>
        <dbReference type="HGNC" id="HGNC:37229"/>
    </source>
</evidence>
<accession>A6NEM1</accession>
<accession>A0A087WXJ1</accession>
<accession>A6NFL8</accession>
<accession>H0YK89</accession>
<accession>Q8IVV3</accession>
<dbReference type="EMBL" id="AC243919">
    <property type="status" value="NOT_ANNOTATED_CDS"/>
    <property type="molecule type" value="Genomic_DNA"/>
</dbReference>
<dbReference type="EMBL" id="BC041854">
    <property type="protein sequence ID" value="AAH41854.1"/>
    <property type="molecule type" value="mRNA"/>
</dbReference>
<dbReference type="CCDS" id="CCDS45326.1">
    <molecule id="A6NEM1-1"/>
</dbReference>
<dbReference type="RefSeq" id="NP_001278349.1">
    <molecule id="A6NEM1-2"/>
    <property type="nucleotide sequence ID" value="NM_001291420.2"/>
</dbReference>
<dbReference type="RefSeq" id="NP_937824.3">
    <molecule id="A6NEM1-1"/>
    <property type="nucleotide sequence ID" value="NM_198181.4"/>
</dbReference>
<dbReference type="RefSeq" id="XP_047288495.1">
    <molecule id="A6NEM1-2"/>
    <property type="nucleotide sequence ID" value="XM_047432539.1"/>
</dbReference>
<dbReference type="SMR" id="A6NEM1"/>
<dbReference type="BioGRID" id="136446">
    <property type="interactions" value="217"/>
</dbReference>
<dbReference type="FunCoup" id="A6NEM1">
    <property type="interactions" value="20"/>
</dbReference>
<dbReference type="IntAct" id="A6NEM1">
    <property type="interactions" value="217"/>
</dbReference>
<dbReference type="STRING" id="9606.ENSP00000481078"/>
<dbReference type="iPTMnet" id="A6NEM1"/>
<dbReference type="PhosphoSitePlus" id="A6NEM1"/>
<dbReference type="BioMuta" id="GOLGA6L9"/>
<dbReference type="jPOST" id="A6NEM1"/>
<dbReference type="MassIVE" id="A6NEM1"/>
<dbReference type="PaxDb" id="9606-ENSP00000481078"/>
<dbReference type="PeptideAtlas" id="A6NEM1"/>
<dbReference type="ProteomicsDB" id="39585"/>
<dbReference type="ProteomicsDB" id="992">
    <molecule id="A6NEM1-2"/>
</dbReference>
<dbReference type="Antibodypedia" id="63177">
    <property type="antibodies" value="40 antibodies from 11 providers"/>
</dbReference>
<dbReference type="DNASU" id="440295"/>
<dbReference type="Ensembl" id="ENST00000618348.2">
    <molecule id="A6NEM1-1"/>
    <property type="protein sequence ID" value="ENSP00000481078.1"/>
    <property type="gene ID" value="ENSG00000197978.10"/>
</dbReference>
<dbReference type="Ensembl" id="ENST00000620574.2">
    <property type="protein sequence ID" value="ENSP00000479589.1"/>
    <property type="gene ID" value="ENSG00000274320.2"/>
</dbReference>
<dbReference type="GeneID" id="440295"/>
<dbReference type="KEGG" id="hsa:440295"/>
<dbReference type="MANE-Select" id="ENST00000618348.2">
    <property type="protein sequence ID" value="ENSP00000481078.1"/>
    <property type="RefSeq nucleotide sequence ID" value="NM_198181.4"/>
    <property type="RefSeq protein sequence ID" value="NP_937824.3"/>
</dbReference>
<dbReference type="UCSC" id="uc032clr.2">
    <property type="organism name" value="human"/>
</dbReference>
<dbReference type="UCSC" id="uc032cxp.2">
    <molecule id="A6NEM1-1"/>
    <property type="organism name" value="human"/>
</dbReference>
<dbReference type="AGR" id="HGNC:37229"/>
<dbReference type="CTD" id="440295"/>
<dbReference type="GeneCards" id="GOLGA6L9"/>
<dbReference type="HGNC" id="HGNC:37229">
    <property type="gene designation" value="GOLGA6L9"/>
</dbReference>
<dbReference type="HPA" id="ENSG00000197978">
    <property type="expression patterns" value="Low tissue specificity"/>
</dbReference>
<dbReference type="neXtProt" id="NX_A6NEM1"/>
<dbReference type="VEuPathDB" id="HostDB:ENSG00000197978"/>
<dbReference type="eggNOG" id="KOG4725">
    <property type="taxonomic scope" value="Eukaryota"/>
</dbReference>
<dbReference type="GeneTree" id="ENSGT00910000144587"/>
<dbReference type="InParanoid" id="A6NEM1"/>
<dbReference type="OMA" id="KNIAGAN"/>
<dbReference type="OrthoDB" id="9488847at2759"/>
<dbReference type="PAN-GO" id="A6NEM1">
    <property type="GO annotations" value="0 GO annotations based on evolutionary models"/>
</dbReference>
<dbReference type="TreeFam" id="TF316990"/>
<dbReference type="PathwayCommons" id="A6NEM1"/>
<dbReference type="SignaLink" id="A6NEM1"/>
<dbReference type="BioGRID-ORCS" id="440295">
    <property type="hits" value="36 hits in 665 CRISPR screens"/>
</dbReference>
<dbReference type="GenomeRNAi" id="440295"/>
<dbReference type="Pharos" id="A6NEM1">
    <property type="development level" value="Tdark"/>
</dbReference>
<dbReference type="PRO" id="PR:A6NEM1"/>
<dbReference type="Proteomes" id="UP000005640">
    <property type="component" value="Chromosome 15"/>
</dbReference>
<dbReference type="RNAct" id="A6NEM1">
    <property type="molecule type" value="protein"/>
</dbReference>
<dbReference type="Bgee" id="ENSG00000197978">
    <property type="expression patterns" value="Expressed in lower esophagus mucosa and 100 other cell types or tissues"/>
</dbReference>
<dbReference type="InterPro" id="IPR026737">
    <property type="entry name" value="GOLGA6L"/>
</dbReference>
<dbReference type="InterPro" id="IPR043976">
    <property type="entry name" value="GOLGA_cons_dom"/>
</dbReference>
<dbReference type="PANTHER" id="PTHR23143:SF19">
    <property type="entry name" value="GOLGIN SUBFAMILY A MEMBER 6-LIKE PROTEIN 10-RELATED"/>
    <property type="match status" value="1"/>
</dbReference>
<dbReference type="PANTHER" id="PTHR23143">
    <property type="entry name" value="TRICHOHYALIN-RELATED"/>
    <property type="match status" value="1"/>
</dbReference>
<dbReference type="Pfam" id="PF15070">
    <property type="entry name" value="GOLGA2L5"/>
    <property type="match status" value="1"/>
</dbReference>
<protein>
    <recommendedName>
        <fullName evidence="4">Golgin subfamily A member 6-like protein 9</fullName>
    </recommendedName>
</protein>
<sequence length="432" mass="49193">MWPQPRLPPHPAMSEKTQQGKLAAAKKKLKAYWQRKSPGIPAGANRKKKINGSSPDTFTSGGYHSPGDSATGIYGEGRASSTTLQDLESQYQELAVALDSSSAIISQLTENINSLVRTSKEEKKHEIHLVQKLGRSLFKLKNQTAEPLAPQPPAGPSKMEQLQDETNHLRKELESVGRQLQAEVENNQMLSLLNRRQEERLREQEERLREQEERLCEQEERLCEQEERLREQEERLCEQEKLPGQERLLEEVEKLLEQERRQEEQERLLERERLLDEVEELLEQERLRQQDERLWQQETLRELERLRELERMLELGWEALYEQRAEPRSGFEELNNENKSTLQLEQQVKELEKSGGAEEPRGSESAAAARPVAGAPVPQGAWMCGQAGWTPQEHPGLSGEAVGTGEAAGGAGEAACHSFRAAENRELNITII</sequence>
<keyword id="KW-0025">Alternative splicing</keyword>
<keyword id="KW-0175">Coiled coil</keyword>
<keyword id="KW-1185">Reference proteome</keyword>
<reference key="1">
    <citation type="journal article" date="2006" name="Nature">
        <title>Analysis of the DNA sequence and duplication history of human chromosome 15.</title>
        <authorList>
            <person name="Zody M.C."/>
            <person name="Garber M."/>
            <person name="Sharpe T."/>
            <person name="Young S.K."/>
            <person name="Rowen L."/>
            <person name="O'Neill K."/>
            <person name="Whittaker C.A."/>
            <person name="Kamal M."/>
            <person name="Chang J.L."/>
            <person name="Cuomo C.A."/>
            <person name="Dewar K."/>
            <person name="FitzGerald M.G."/>
            <person name="Kodira C.D."/>
            <person name="Madan A."/>
            <person name="Qin S."/>
            <person name="Yang X."/>
            <person name="Abbasi N."/>
            <person name="Abouelleil A."/>
            <person name="Arachchi H.M."/>
            <person name="Baradarani L."/>
            <person name="Birditt B."/>
            <person name="Bloom S."/>
            <person name="Bloom T."/>
            <person name="Borowsky M.L."/>
            <person name="Burke J."/>
            <person name="Butler J."/>
            <person name="Cook A."/>
            <person name="DeArellano K."/>
            <person name="DeCaprio D."/>
            <person name="Dorris L. III"/>
            <person name="Dors M."/>
            <person name="Eichler E.E."/>
            <person name="Engels R."/>
            <person name="Fahey J."/>
            <person name="Fleetwood P."/>
            <person name="Friedman C."/>
            <person name="Gearin G."/>
            <person name="Hall J.L."/>
            <person name="Hensley G."/>
            <person name="Johnson E."/>
            <person name="Jones C."/>
            <person name="Kamat A."/>
            <person name="Kaur A."/>
            <person name="Locke D.P."/>
            <person name="Madan A."/>
            <person name="Munson G."/>
            <person name="Jaffe D.B."/>
            <person name="Lui A."/>
            <person name="Macdonald P."/>
            <person name="Mauceli E."/>
            <person name="Naylor J.W."/>
            <person name="Nesbitt R."/>
            <person name="Nicol R."/>
            <person name="O'Leary S.B."/>
            <person name="Ratcliffe A."/>
            <person name="Rounsley S."/>
            <person name="She X."/>
            <person name="Sneddon K.M.B."/>
            <person name="Stewart S."/>
            <person name="Sougnez C."/>
            <person name="Stone S.M."/>
            <person name="Topham K."/>
            <person name="Vincent D."/>
            <person name="Wang S."/>
            <person name="Zimmer A.R."/>
            <person name="Birren B.W."/>
            <person name="Hood L."/>
            <person name="Lander E.S."/>
            <person name="Nusbaum C."/>
        </authorList>
    </citation>
    <scope>NUCLEOTIDE SEQUENCE [LARGE SCALE GENOMIC DNA]</scope>
</reference>
<reference key="2">
    <citation type="journal article" date="2004" name="Genome Res.">
        <title>The status, quality, and expansion of the NIH full-length cDNA project: the Mammalian Gene Collection (MGC).</title>
        <authorList>
            <consortium name="The MGC Project Team"/>
        </authorList>
    </citation>
    <scope>NUCLEOTIDE SEQUENCE [LARGE SCALE MRNA] (ISOFORM 2)</scope>
    <source>
        <tissue>Testis</tissue>
    </source>
</reference>
<comment type="interaction">
    <interactant intactId="EBI-5916454">
        <id>A6NEM1</id>
    </interactant>
    <interactant intactId="EBI-8643161">
        <id>Q9NX04</id>
        <label>AIRIM</label>
    </interactant>
    <organismsDiffer>false</organismsDiffer>
    <experiments>3</experiments>
</comment>
<comment type="interaction">
    <interactant intactId="EBI-5916454">
        <id>A6NEM1</id>
    </interactant>
    <interactant intactId="EBI-17183751">
        <id>X5D778</id>
        <label>ANKRD11</label>
    </interactant>
    <organismsDiffer>false</organismsDiffer>
    <experiments>3</experiments>
</comment>
<comment type="interaction">
    <interactant intactId="EBI-5916454">
        <id>A6NEM1</id>
    </interactant>
    <interactant intactId="EBI-750254">
        <id>Q9BRR9</id>
        <label>ARHGAP9</label>
    </interactant>
    <organismsDiffer>false</organismsDiffer>
    <experiments>3</experiments>
</comment>
<comment type="interaction">
    <interactant intactId="EBI-5916454">
        <id>A6NEM1</id>
    </interactant>
    <interactant intactId="EBI-1646500">
        <id>Q8IXJ9</id>
        <label>ASXL1</label>
    </interactant>
    <organismsDiffer>false</organismsDiffer>
    <experiments>3</experiments>
</comment>
<comment type="interaction">
    <interactant intactId="EBI-5916454">
        <id>A6NEM1</id>
    </interactant>
    <interactant intactId="EBI-711802">
        <id>O75348</id>
        <label>ATP6V1G1</label>
    </interactant>
    <organismsDiffer>false</organismsDiffer>
    <experiments>3</experiments>
</comment>
<comment type="interaction">
    <interactant intactId="EBI-5916454">
        <id>A6NEM1</id>
    </interactant>
    <interactant intactId="EBI-1166928">
        <id>Q8N5M1</id>
        <label>ATPAF2</label>
    </interactant>
    <organismsDiffer>false</organismsDiffer>
    <experiments>3</experiments>
</comment>
<comment type="interaction">
    <interactant intactId="EBI-5916454">
        <id>A6NEM1</id>
    </interactant>
    <interactant intactId="EBI-8640233">
        <id>Q5T686</id>
        <label>AVPI1</label>
    </interactant>
    <organismsDiffer>false</organismsDiffer>
    <experiments>3</experiments>
</comment>
<comment type="interaction">
    <interactant intactId="EBI-5916454">
        <id>A6NEM1</id>
    </interactant>
    <interactant intactId="EBI-10988864">
        <id>P46379-2</id>
        <label>BAG6</label>
    </interactant>
    <organismsDiffer>false</organismsDiffer>
    <experiments>3</experiments>
</comment>
<comment type="interaction">
    <interactant intactId="EBI-5916454">
        <id>A6NEM1</id>
    </interactant>
    <interactant intactId="EBI-742750">
        <id>Q8TBE0</id>
        <label>BAHD1</label>
    </interactant>
    <organismsDiffer>false</organismsDiffer>
    <experiments>3</experiments>
</comment>
<comment type="interaction">
    <interactant intactId="EBI-5916454">
        <id>A6NEM1</id>
    </interactant>
    <interactant intactId="EBI-11524452">
        <id>Q8N9N5-2</id>
        <label>BANP</label>
    </interactant>
    <organismsDiffer>false</organismsDiffer>
    <experiments>3</experiments>
</comment>
<comment type="interaction">
    <interactant intactId="EBI-5916454">
        <id>A6NEM1</id>
    </interactant>
    <interactant intactId="EBI-10174813">
        <id>A8KA13</id>
        <label>BCL6B</label>
    </interactant>
    <organismsDiffer>false</organismsDiffer>
    <experiments>3</experiments>
</comment>
<comment type="interaction">
    <interactant intactId="EBI-5916454">
        <id>A6NEM1</id>
    </interactant>
    <interactant intactId="EBI-17508719">
        <id>Q7RTU4</id>
        <label>BHLHA9</label>
    </interactant>
    <organismsDiffer>false</organismsDiffer>
    <experiments>3</experiments>
</comment>
<comment type="interaction">
    <interactant intactId="EBI-5916454">
        <id>A6NEM1</id>
    </interactant>
    <interactant intactId="EBI-358049">
        <id>Q13895</id>
        <label>BYSL</label>
    </interactant>
    <organismsDiffer>false</organismsDiffer>
    <experiments>3</experiments>
</comment>
<comment type="interaction">
    <interactant intactId="EBI-5916454">
        <id>A6NEM1</id>
    </interactant>
    <interactant intactId="EBI-12030460">
        <id>Q8WYQ4-2</id>
        <label>C22orf15</label>
    </interactant>
    <organismsDiffer>false</organismsDiffer>
    <experiments>3</experiments>
</comment>
<comment type="interaction">
    <interactant intactId="EBI-5916454">
        <id>A6NEM1</id>
    </interactant>
    <interactant intactId="EBI-905851">
        <id>P01024</id>
        <label>C3</label>
    </interactant>
    <organismsDiffer>false</organismsDiffer>
    <experiments>3</experiments>
</comment>
<comment type="interaction">
    <interactant intactId="EBI-5916454">
        <id>A6NEM1</id>
    </interactant>
    <interactant intactId="EBI-12011224">
        <id>Q9NPB3</id>
        <label>CABP2</label>
    </interactant>
    <organismsDiffer>false</organismsDiffer>
    <experiments>3</experiments>
</comment>
<comment type="interaction">
    <interactant intactId="EBI-5916454">
        <id>A6NEM1</id>
    </interactant>
    <interactant intactId="EBI-10258233">
        <id>Q7Z7H3</id>
        <label>CATIP</label>
    </interactant>
    <organismsDiffer>false</organismsDiffer>
    <experiments>3</experiments>
</comment>
<comment type="interaction">
    <interactant intactId="EBI-5916454">
        <id>A6NEM1</id>
    </interactant>
    <interactant intactId="EBI-3893101">
        <id>Q969G5</id>
        <label>CAVIN3</label>
    </interactant>
    <organismsDiffer>false</organismsDiffer>
    <experiments>3</experiments>
</comment>
<comment type="interaction">
    <interactant intactId="EBI-5916454">
        <id>A6NEM1</id>
    </interactant>
    <interactant intactId="EBI-712912">
        <id>Q9HC52</id>
        <label>CBX8</label>
    </interactant>
    <organismsDiffer>false</organismsDiffer>
    <experiments>3</experiments>
</comment>
<comment type="interaction">
    <interactant intactId="EBI-5916454">
        <id>A6NEM1</id>
    </interactant>
    <interactant intactId="EBI-744311">
        <id>Q8IYX3</id>
        <label>CCDC116</label>
    </interactant>
    <organismsDiffer>false</organismsDiffer>
    <experiments>3</experiments>
</comment>
<comment type="interaction">
    <interactant intactId="EBI-5916454">
        <id>A6NEM1</id>
    </interactant>
    <interactant intactId="EBI-744556">
        <id>Q96HB5</id>
        <label>CCDC120</label>
    </interactant>
    <organismsDiffer>false</organismsDiffer>
    <experiments>3</experiments>
</comment>
<comment type="interaction">
    <interactant intactId="EBI-5916454">
        <id>A6NEM1</id>
    </interactant>
    <interactant intactId="EBI-10749669">
        <id>Q8IYE0</id>
        <label>CCDC146</label>
    </interactant>
    <organismsDiffer>false</organismsDiffer>
    <experiments>3</experiments>
</comment>
<comment type="interaction">
    <interactant intactId="EBI-5916454">
        <id>A6NEM1</id>
    </interactant>
    <interactant intactId="EBI-740814">
        <id>Q8N715</id>
        <label>CCDC185</label>
    </interactant>
    <organismsDiffer>false</organismsDiffer>
    <experiments>3</experiments>
</comment>
<comment type="interaction">
    <interactant intactId="EBI-5916454">
        <id>A6NEM1</id>
    </interactant>
    <interactant intactId="EBI-10175300">
        <id>Q8TD31-3</id>
        <label>CCHCR1</label>
    </interactant>
    <organismsDiffer>false</organismsDiffer>
    <experiments>3</experiments>
</comment>
<comment type="interaction">
    <interactant intactId="EBI-5916454">
        <id>A6NEM1</id>
    </interactant>
    <interactant intactId="EBI-295634">
        <id>Q16543</id>
        <label>CDC37</label>
    </interactant>
    <organismsDiffer>false</organismsDiffer>
    <experiments>3</experiments>
</comment>
<comment type="interaction">
    <interactant intactId="EBI-5916454">
        <id>A6NEM1</id>
    </interactant>
    <interactant intactId="EBI-930143">
        <id>Q6P1J9</id>
        <label>CDC73</label>
    </interactant>
    <organismsDiffer>false</organismsDiffer>
    <experiments>3</experiments>
</comment>
<comment type="interaction">
    <interactant intactId="EBI-5916454">
        <id>A6NEM1</id>
    </interactant>
    <interactant intactId="EBI-746238">
        <id>Q07002</id>
        <label>CDK18</label>
    </interactant>
    <organismsDiffer>false</organismsDiffer>
    <experiments>3</experiments>
</comment>
<comment type="interaction">
    <interactant intactId="EBI-5916454">
        <id>A6NEM1</id>
    </interactant>
    <interactant intactId="EBI-739498">
        <id>Q9P209</id>
        <label>CEP72</label>
    </interactant>
    <organismsDiffer>false</organismsDiffer>
    <experiments>3</experiments>
</comment>
<comment type="interaction">
    <interactant intactId="EBI-5916454">
        <id>A6NEM1</id>
    </interactant>
    <interactant intactId="EBI-372775">
        <id>Q96GE4</id>
        <label>CEP95</label>
    </interactant>
    <organismsDiffer>false</organismsDiffer>
    <experiments>3</experiments>
</comment>
<comment type="interaction">
    <interactant intactId="EBI-5916454">
        <id>A6NEM1</id>
    </interactant>
    <interactant intactId="EBI-741032">
        <id>Q8NE01</id>
        <label>CNNM3</label>
    </interactant>
    <organismsDiffer>false</organismsDiffer>
    <experiments>3</experiments>
</comment>
<comment type="interaction">
    <interactant intactId="EBI-5916454">
        <id>A6NEM1</id>
    </interactant>
    <interactant intactId="EBI-5453285">
        <id>Q2TBE0</id>
        <label>CWF19L2</label>
    </interactant>
    <organismsDiffer>false</organismsDiffer>
    <experiments>3</experiments>
</comment>
<comment type="interaction">
    <interactant intactId="EBI-5916454">
        <id>A6NEM1</id>
    </interactant>
    <interactant intactId="EBI-77321">
        <id>Q9UER7</id>
        <label>DAXX</label>
    </interactant>
    <organismsDiffer>false</organismsDiffer>
    <experiments>3</experiments>
</comment>
<comment type="interaction">
    <interactant intactId="EBI-5916454">
        <id>A6NEM1</id>
    </interactant>
    <interactant intactId="EBI-745369">
        <id>Q9H4E7</id>
        <label>DEF6</label>
    </interactant>
    <organismsDiffer>false</organismsDiffer>
    <experiments>3</experiments>
</comment>
<comment type="interaction">
    <interactant intactId="EBI-5916454">
        <id>A6NEM1</id>
    </interactant>
    <interactant intactId="EBI-2856768">
        <id>Q6IQ26</id>
        <label>DENND5A</label>
    </interactant>
    <organismsDiffer>false</organismsDiffer>
    <experiments>3</experiments>
</comment>
<comment type="interaction">
    <interactant intactId="EBI-5916454">
        <id>A6NEM1</id>
    </interactant>
    <interactant intactId="EBI-1055572">
        <id>P17661</id>
        <label>DES</label>
    </interactant>
    <organismsDiffer>false</organismsDiffer>
    <experiments>3</experiments>
</comment>
<comment type="interaction">
    <interactant intactId="EBI-5916454">
        <id>A6NEM1</id>
    </interactant>
    <interactant intactId="EBI-448771">
        <id>Q92608</id>
        <label>DOCK2</label>
    </interactant>
    <organismsDiffer>false</organismsDiffer>
    <experiments>3</experiments>
</comment>
<comment type="interaction">
    <interactant intactId="EBI-5916454">
        <id>A6NEM1</id>
    </interactant>
    <interactant intactId="EBI-359932">
        <id>Q92785</id>
        <label>DPF2</label>
    </interactant>
    <organismsDiffer>false</organismsDiffer>
    <experiments>3</experiments>
</comment>
<comment type="interaction">
    <interactant intactId="EBI-5916454">
        <id>A6NEM1</id>
    </interactant>
    <interactant intactId="EBI-2924519">
        <id>Q9BV47</id>
        <label>DUSP26</label>
    </interactant>
    <organismsDiffer>false</organismsDiffer>
    <experiments>3</experiments>
</comment>
<comment type="interaction">
    <interactant intactId="EBI-5916454">
        <id>A6NEM1</id>
    </interactant>
    <interactant intactId="EBI-769261">
        <id>Q96JC9</id>
        <label>EAF1</label>
    </interactant>
    <organismsDiffer>false</organismsDiffer>
    <experiments>3</experiments>
</comment>
<comment type="interaction">
    <interactant intactId="EBI-5916454">
        <id>A6NEM1</id>
    </interactant>
    <interactant intactId="EBI-353818">
        <id>O15371</id>
        <label>EIF3D</label>
    </interactant>
    <organismsDiffer>false</organismsDiffer>
    <experiments>3</experiments>
</comment>
<comment type="interaction">
    <interactant intactId="EBI-5916454">
        <id>A6NEM1</id>
    </interactant>
    <interactant intactId="EBI-744099">
        <id>Q9H0I2</id>
        <label>ENKD1</label>
    </interactant>
    <organismsDiffer>false</organismsDiffer>
    <experiments>3</experiments>
</comment>
<comment type="interaction">
    <interactant intactId="EBI-5916454">
        <id>A6NEM1</id>
    </interactant>
    <interactant intactId="EBI-12013806">
        <id>Q6NZ36-4</id>
        <label>FAAP20</label>
    </interactant>
    <organismsDiffer>false</organismsDiffer>
    <experiments>3</experiments>
</comment>
<comment type="interaction">
    <interactant intactId="EBI-5916454">
        <id>A6NEM1</id>
    </interactant>
    <interactant intactId="EBI-11977223">
        <id>O95990-4</id>
        <label>FAM107A</label>
    </interactant>
    <organismsDiffer>false</organismsDiffer>
    <experiments>3</experiments>
</comment>
<comment type="interaction">
    <interactant intactId="EBI-5916454">
        <id>A6NEM1</id>
    </interactant>
    <interactant intactId="EBI-1752811">
        <id>Q9BQ89</id>
        <label>FAM110A</label>
    </interactant>
    <organismsDiffer>false</organismsDiffer>
    <experiments>3</experiments>
</comment>
<comment type="interaction">
    <interactant intactId="EBI-5916454">
        <id>A6NEM1</id>
    </interactant>
    <interactant intactId="EBI-719941">
        <id>Q3B820</id>
        <label>FAM161A</label>
    </interactant>
    <organismsDiffer>false</organismsDiffer>
    <experiments>3</experiments>
</comment>
<comment type="interaction">
    <interactant intactId="EBI-5916454">
        <id>A6NEM1</id>
    </interactant>
    <interactant intactId="EBI-7225287">
        <id>Q96MY7</id>
        <label>FAM161B</label>
    </interactant>
    <organismsDiffer>false</organismsDiffer>
    <experiments>3</experiments>
</comment>
<comment type="interaction">
    <interactant intactId="EBI-5916454">
        <id>A6NEM1</id>
    </interactant>
    <interactant intactId="EBI-740282">
        <id>Q9NVF7</id>
        <label>FBXO28</label>
    </interactant>
    <organismsDiffer>false</organismsDiffer>
    <experiments>3</experiments>
</comment>
<comment type="interaction">
    <interactant intactId="EBI-5916454">
        <id>A6NEM1</id>
    </interactant>
    <interactant intactId="EBI-2515349">
        <id>Q9BSK4</id>
        <label>FEM1A</label>
    </interactant>
    <organismsDiffer>false</organismsDiffer>
    <experiments>3</experiments>
</comment>
<comment type="interaction">
    <interactant intactId="EBI-5916454">
        <id>A6NEM1</id>
    </interactant>
    <interactant intactId="EBI-719415">
        <id>Q4VC44</id>
        <label>FLYWCH1</label>
    </interactant>
    <organismsDiffer>false</organismsDiffer>
    <experiments>3</experiments>
</comment>
<comment type="interaction">
    <interactant intactId="EBI-5916454">
        <id>A6NEM1</id>
    </interactant>
    <interactant intactId="EBI-949340">
        <id>Q16595</id>
        <label>FXN</label>
    </interactant>
    <organismsDiffer>false</organismsDiffer>
    <experiments>3</experiments>
</comment>
<comment type="interaction">
    <interactant intactId="EBI-5916454">
        <id>A6NEM1</id>
    </interactant>
    <interactant intactId="EBI-372506">
        <id>Q8TAE8</id>
        <label>GADD45GIP1</label>
    </interactant>
    <organismsDiffer>false</organismsDiffer>
    <experiments>3</experiments>
</comment>
<comment type="interaction">
    <interactant intactId="EBI-5916454">
        <id>A6NEM1</id>
    </interactant>
    <interactant intactId="EBI-7960826">
        <id>Q8NHY3</id>
        <label>GAS2L2</label>
    </interactant>
    <organismsDiffer>false</organismsDiffer>
    <experiments>3</experiments>
</comment>
<comment type="interaction">
    <interactant intactId="EBI-5916454">
        <id>A6NEM1</id>
    </interactant>
    <interactant intactId="EBI-744104">
        <id>P55040</id>
        <label>GEM</label>
    </interactant>
    <organismsDiffer>false</organismsDiffer>
    <experiments>3</experiments>
</comment>
<comment type="interaction">
    <interactant intactId="EBI-5916454">
        <id>A6NEM1</id>
    </interactant>
    <interactant intactId="EBI-7251368">
        <id>Q9BZE0</id>
        <label>GLIS2</label>
    </interactant>
    <organismsDiffer>false</organismsDiffer>
    <experiments>3</experiments>
</comment>
<comment type="interaction">
    <interactant intactId="EBI-5916454">
        <id>A6NEM1</id>
    </interactant>
    <interactant intactId="EBI-751540">
        <id>O95872</id>
        <label>GPANK1</label>
    </interactant>
    <organismsDiffer>false</organismsDiffer>
    <experiments>3</experiments>
</comment>
<comment type="interaction">
    <interactant intactId="EBI-5916454">
        <id>A6NEM1</id>
    </interactant>
    <interactant intactId="EBI-389564">
        <id>Q00403</id>
        <label>GTF2B</label>
    </interactant>
    <organismsDiffer>false</organismsDiffer>
    <experiments>3</experiments>
</comment>
<comment type="interaction">
    <interactant intactId="EBI-5916454">
        <id>A6NEM1</id>
    </interactant>
    <interactant intactId="EBI-11956675">
        <id>Q9GZV7</id>
        <label>HAPLN2</label>
    </interactant>
    <organismsDiffer>false</organismsDiffer>
    <experiments>3</experiments>
</comment>
<comment type="interaction">
    <interactant intactId="EBI-5916454">
        <id>A6NEM1</id>
    </interactant>
    <interactant intactId="EBI-719843">
        <id>P02008</id>
        <label>HBZ</label>
    </interactant>
    <organismsDiffer>false</organismsDiffer>
    <experiments>3</experiments>
</comment>
<comment type="interaction">
    <interactant intactId="EBI-5916454">
        <id>A6NEM1</id>
    </interactant>
    <interactant intactId="EBI-11953488">
        <id>P56524-2</id>
        <label>HDAC4</label>
    </interactant>
    <organismsDiffer>false</organismsDiffer>
    <experiments>3</experiments>
</comment>
<comment type="interaction">
    <interactant intactId="EBI-5916454">
        <id>A6NEM1</id>
    </interactant>
    <interactant intactId="EBI-12094670">
        <id>Q8WUI4-6</id>
        <label>HDAC7</label>
    </interactant>
    <organismsDiffer>false</organismsDiffer>
    <experiments>3</experiments>
</comment>
<comment type="interaction">
    <interactant intactId="EBI-5916454">
        <id>A6NEM1</id>
    </interactant>
    <interactant intactId="EBI-740220">
        <id>O14964</id>
        <label>HGS</label>
    </interactant>
    <organismsDiffer>false</organismsDiffer>
    <experiments>3</experiments>
</comment>
<comment type="interaction">
    <interactant intactId="EBI-5916454">
        <id>A6NEM1</id>
    </interactant>
    <interactant intactId="EBI-3893317">
        <id>P09067</id>
        <label>HOXB5</label>
    </interactant>
    <organismsDiffer>false</organismsDiffer>
    <experiments>3</experiments>
</comment>
<comment type="interaction">
    <interactant intactId="EBI-5916454">
        <id>A6NEM1</id>
    </interactant>
    <interactant intactId="EBI-745290">
        <id>P17482</id>
        <label>HOXB9</label>
    </interactant>
    <organismsDiffer>false</organismsDiffer>
    <experiments>3</experiments>
</comment>
<comment type="interaction">
    <interactant intactId="EBI-5916454">
        <id>A6NEM1</id>
    </interactant>
    <interactant intactId="EBI-1752118">
        <id>P31273</id>
        <label>HOXC8</label>
    </interactant>
    <organismsDiffer>false</organismsDiffer>
    <experiments>3</experiments>
</comment>
<comment type="interaction">
    <interactant intactId="EBI-5916454">
        <id>A6NEM1</id>
    </interactant>
    <interactant intactId="EBI-17178971">
        <id>Q14005-2</id>
        <label>IL16</label>
    </interactant>
    <organismsDiffer>false</organismsDiffer>
    <experiments>3</experiments>
</comment>
<comment type="interaction">
    <interactant intactId="EBI-5916454">
        <id>A6NEM1</id>
    </interactant>
    <interactant intactId="EBI-715611">
        <id>Q9C086</id>
        <label>INO80B</label>
    </interactant>
    <organismsDiffer>false</organismsDiffer>
    <experiments>3</experiments>
</comment>
<comment type="interaction">
    <interactant intactId="EBI-5916454">
        <id>A6NEM1</id>
    </interactant>
    <interactant intactId="EBI-1047335">
        <id>Q9H1K1</id>
        <label>ISCU</label>
    </interactant>
    <organismsDiffer>false</organismsDiffer>
    <experiments>3</experiments>
</comment>
<comment type="interaction">
    <interactant intactId="EBI-5916454">
        <id>A6NEM1</id>
    </interactant>
    <interactant intactId="EBI-10268138">
        <id>Q8N9B5-2</id>
        <label>JMY</label>
    </interactant>
    <organismsDiffer>false</organismsDiffer>
    <experiments>3</experiments>
</comment>
<comment type="interaction">
    <interactant intactId="EBI-5916454">
        <id>A6NEM1</id>
    </interactant>
    <interactant intactId="EBI-17181882">
        <id>O75564-2</id>
        <label>JRK</label>
    </interactant>
    <organismsDiffer>false</organismsDiffer>
    <experiments>3</experiments>
</comment>
<comment type="interaction">
    <interactant intactId="EBI-5916454">
        <id>A6NEM1</id>
    </interactant>
    <interactant intactId="EBI-2556193">
        <id>Q63ZY3</id>
        <label>KANK2</label>
    </interactant>
    <organismsDiffer>false</organismsDiffer>
    <experiments>3</experiments>
</comment>
<comment type="interaction">
    <interactant intactId="EBI-5916454">
        <id>A6NEM1</id>
    </interactant>
    <interactant intactId="EBI-4397613">
        <id>Q7L273</id>
        <label>KCTD9</label>
    </interactant>
    <organismsDiffer>false</organismsDiffer>
    <experiments>3</experiments>
</comment>
<comment type="interaction">
    <interactant intactId="EBI-5916454">
        <id>A6NEM1</id>
    </interactant>
    <interactant intactId="EBI-9477654">
        <id>Q6PF15</id>
        <label>KLHL35</label>
    </interactant>
    <organismsDiffer>false</organismsDiffer>
    <experiments>3</experiments>
</comment>
<comment type="interaction">
    <interactant intactId="EBI-5916454">
        <id>A6NEM1</id>
    </interactant>
    <interactant intactId="EBI-298429">
        <id>P04264</id>
        <label>KRT1</label>
    </interactant>
    <organismsDiffer>false</organismsDiffer>
    <experiments>3</experiments>
</comment>
<comment type="interaction">
    <interactant intactId="EBI-5916454">
        <id>A6NEM1</id>
    </interactant>
    <interactant intactId="EBI-2949715">
        <id>O95678</id>
        <label>KRT75</label>
    </interactant>
    <organismsDiffer>false</organismsDiffer>
    <experiments>3</experiments>
</comment>
<comment type="interaction">
    <interactant intactId="EBI-5916454">
        <id>A6NEM1</id>
    </interactant>
    <interactant intactId="EBI-1052105">
        <id>Q14657</id>
        <label>LAGE3</label>
    </interactant>
    <organismsDiffer>false</organismsDiffer>
    <experiments>3</experiments>
</comment>
<comment type="interaction">
    <interactant intactId="EBI-5916454">
        <id>A6NEM1</id>
    </interactant>
    <interactant intactId="EBI-726510">
        <id>Q96BZ8</id>
        <label>LENG1</label>
    </interactant>
    <organismsDiffer>false</organismsDiffer>
    <experiments>3</experiments>
</comment>
<comment type="interaction">
    <interactant intactId="EBI-5916454">
        <id>A6NEM1</id>
    </interactant>
    <interactant intactId="EBI-720805">
        <id>P56470</id>
        <label>LGALS4</label>
    </interactant>
    <organismsDiffer>false</organismsDiffer>
    <experiments>3</experiments>
</comment>
<comment type="interaction">
    <interactant intactId="EBI-5916454">
        <id>A6NEM1</id>
    </interactant>
    <interactant intactId="EBI-11742507">
        <id>Q8TAP4-4</id>
        <label>LMO3</label>
    </interactant>
    <organismsDiffer>false</organismsDiffer>
    <experiments>3</experiments>
</comment>
<comment type="interaction">
    <interactant intactId="EBI-5916454">
        <id>A6NEM1</id>
    </interactant>
    <interactant intactId="EBI-2798728">
        <id>P61968</id>
        <label>LMO4</label>
    </interactant>
    <organismsDiffer>false</organismsDiffer>
    <experiments>3</experiments>
</comment>
<comment type="interaction">
    <interactant intactId="EBI-5916454">
        <id>A6NEM1</id>
    </interactant>
    <interactant intactId="EBI-10293291">
        <id>Q96S90</id>
        <label>LYSMD1</label>
    </interactant>
    <organismsDiffer>false</organismsDiffer>
    <experiments>3</experiments>
</comment>
<comment type="interaction">
    <interactant intactId="EBI-5916454">
        <id>A6NEM1</id>
    </interactant>
    <interactant intactId="EBI-748182">
        <id>Q8TC57</id>
        <label>M1AP</label>
    </interactant>
    <organismsDiffer>false</organismsDiffer>
    <experiments>3</experiments>
</comment>
<comment type="interaction">
    <interactant intactId="EBI-5916454">
        <id>A6NEM1</id>
    </interactant>
    <interactant intactId="EBI-6659161">
        <id>Q9Y586</id>
        <label>MAB21L2</label>
    </interactant>
    <organismsDiffer>false</organismsDiffer>
    <experiments>3</experiments>
</comment>
<comment type="interaction">
    <interactant intactId="EBI-5916454">
        <id>A6NEM1</id>
    </interactant>
    <interactant intactId="EBI-11978579">
        <id>O95983-2</id>
        <label>MBD3</label>
    </interactant>
    <organismsDiffer>false</organismsDiffer>
    <experiments>3</experiments>
</comment>
<comment type="interaction">
    <interactant intactId="EBI-5916454">
        <id>A6NEM1</id>
    </interactant>
    <interactant intactId="EBI-11989378">
        <id>Q8NHZ7</id>
        <label>MBD3L2</label>
    </interactant>
    <organismsDiffer>false</organismsDiffer>
    <experiments>3</experiments>
</comment>
<comment type="interaction">
    <interactant intactId="EBI-5916454">
        <id>A6NEM1</id>
    </interactant>
    <interactant intactId="EBI-1048159">
        <id>P55081</id>
        <label>MFAP1</label>
    </interactant>
    <organismsDiffer>false</organismsDiffer>
    <experiments>3</experiments>
</comment>
<comment type="interaction">
    <interactant intactId="EBI-5916454">
        <id>A6NEM1</id>
    </interactant>
    <interactant intactId="EBI-14086479">
        <id>Q8IVT4</id>
        <label>MGC50722</label>
    </interactant>
    <organismsDiffer>false</organismsDiffer>
    <experiments>3</experiments>
</comment>
<comment type="interaction">
    <interactant intactId="EBI-5916454">
        <id>A6NEM1</id>
    </interactant>
    <interactant intactId="EBI-742459">
        <id>Q9BU76</id>
        <label>MMTAG2</label>
    </interactant>
    <organismsDiffer>false</organismsDiffer>
    <experiments>3</experiments>
</comment>
<comment type="interaction">
    <interactant intactId="EBI-5916454">
        <id>A6NEM1</id>
    </interactant>
    <interactant intactId="EBI-1757866">
        <id>P00540</id>
        <label>MOS</label>
    </interactant>
    <organismsDiffer>false</organismsDiffer>
    <experiments>3</experiments>
</comment>
<comment type="interaction">
    <interactant intactId="EBI-5916454">
        <id>A6NEM1</id>
    </interactant>
    <interactant intactId="EBI-5453723">
        <id>Q9Y3B7</id>
        <label>MRPL11</label>
    </interactant>
    <organismsDiffer>false</organismsDiffer>
    <experiments>3</experiments>
</comment>
<comment type="interaction">
    <interactant intactId="EBI-5916454">
        <id>A6NEM1</id>
    </interactant>
    <interactant intactId="EBI-5662487">
        <id>Q8TDC0</id>
        <label>MYOZ3</label>
    </interactant>
    <organismsDiffer>false</organismsDiffer>
    <experiments>3</experiments>
</comment>
<comment type="interaction">
    <interactant intactId="EBI-5916454">
        <id>A6NEM1</id>
    </interactant>
    <interactant intactId="EBI-8641936">
        <id>Q15742</id>
        <label>NAB2</label>
    </interactant>
    <organismsDiffer>false</organismsDiffer>
    <experiments>3</experiments>
</comment>
<comment type="interaction">
    <interactant intactId="EBI-5916454">
        <id>A6NEM1</id>
    </interactant>
    <interactant intactId="EBI-2114801">
        <id>Q9BU61</id>
        <label>NDUFAF3</label>
    </interactant>
    <organismsDiffer>false</organismsDiffer>
    <experiments>3</experiments>
</comment>
<comment type="interaction">
    <interactant intactId="EBI-5916454">
        <id>A6NEM1</id>
    </interactant>
    <interactant intactId="EBI-12028784">
        <id>Q6X4W1-2</id>
        <label>NSMF</label>
    </interactant>
    <organismsDiffer>false</organismsDiffer>
    <experiments>3</experiments>
</comment>
<comment type="interaction">
    <interactant intactId="EBI-5916454">
        <id>A6NEM1</id>
    </interactant>
    <interactant intactId="EBI-741158">
        <id>Q96HA8</id>
        <label>NTAQ1</label>
    </interactant>
    <organismsDiffer>false</organismsDiffer>
    <experiments>3</experiments>
</comment>
<comment type="interaction">
    <interactant intactId="EBI-5916454">
        <id>A6NEM1</id>
    </interactant>
    <interactant intactId="EBI-398874">
        <id>Q9UBU9</id>
        <label>NXF1</label>
    </interactant>
    <organismsDiffer>false</organismsDiffer>
    <experiments>3</experiments>
</comment>
<comment type="interaction">
    <interactant intactId="EBI-5916454">
        <id>A6NEM1</id>
    </interactant>
    <interactant intactId="EBI-10698339">
        <id>Q9NPJ8-3</id>
        <label>NXT2</label>
    </interactant>
    <organismsDiffer>false</organismsDiffer>
    <experiments>3</experiments>
</comment>
<comment type="interaction">
    <interactant intactId="EBI-5916454">
        <id>A6NEM1</id>
    </interactant>
    <interactant intactId="EBI-374847">
        <id>Q13415</id>
        <label>ORC1</label>
    </interactant>
    <organismsDiffer>false</organismsDiffer>
    <experiments>3</experiments>
</comment>
<comment type="interaction">
    <interactant intactId="EBI-5916454">
        <id>A6NEM1</id>
    </interactant>
    <interactant intactId="EBI-11022007">
        <id>Q9HBE1-4</id>
        <label>PATZ1</label>
    </interactant>
    <organismsDiffer>false</organismsDiffer>
    <experiments>3</experiments>
</comment>
<comment type="interaction">
    <interactant intactId="EBI-5916454">
        <id>A6NEM1</id>
    </interactant>
    <interactant intactId="EBI-10329013">
        <id>Q9Y5E9</id>
        <label>PCDHB14</label>
    </interactant>
    <organismsDiffer>false</organismsDiffer>
    <experiments>3</experiments>
</comment>
<comment type="interaction">
    <interactant intactId="EBI-5916454">
        <id>A6NEM1</id>
    </interactant>
    <interactant intactId="EBI-530034">
        <id>O43189</id>
        <label>PHF1</label>
    </interactant>
    <organismsDiffer>false</organismsDiffer>
    <experiments>3</experiments>
</comment>
<comment type="interaction">
    <interactant intactId="EBI-5916454">
        <id>A6NEM1</id>
    </interactant>
    <interactant intactId="EBI-714158">
        <id>Q13526</id>
        <label>PIN1</label>
    </interactant>
    <organismsDiffer>false</organismsDiffer>
    <experiments>3</experiments>
</comment>
<comment type="interaction">
    <interactant intactId="EBI-5916454">
        <id>A6NEM1</id>
    </interactant>
    <interactant intactId="EBI-602382">
        <id>Q16512</id>
        <label>PKN1</label>
    </interactant>
    <organismsDiffer>false</organismsDiffer>
    <experiments>3</experiments>
</comment>
<comment type="interaction">
    <interactant intactId="EBI-5916454">
        <id>A6NEM1</id>
    </interactant>
    <interactant intactId="EBI-10171633">
        <id>Q96PV4</id>
        <label>PNMA5</label>
    </interactant>
    <organismsDiffer>false</organismsDiffer>
    <experiments>3</experiments>
</comment>
<comment type="interaction">
    <interactant intactId="EBI-5916454">
        <id>A6NEM1</id>
    </interactant>
    <interactant intactId="EBI-10320765">
        <id>Q9UGP5-2</id>
        <label>POLL</label>
    </interactant>
    <organismsDiffer>false</organismsDiffer>
    <experiments>3</experiments>
</comment>
<comment type="interaction">
    <interactant intactId="EBI-5916454">
        <id>A6NEM1</id>
    </interactant>
    <interactant intactId="EBI-1055079">
        <id>O15160</id>
        <label>POLR1C</label>
    </interactant>
    <organismsDiffer>false</organismsDiffer>
    <experiments>3</experiments>
</comment>
<comment type="interaction">
    <interactant intactId="EBI-5916454">
        <id>A6NEM1</id>
    </interactant>
    <interactant intactId="EBI-12029004">
        <id>P78424</id>
        <label>POU6F2</label>
    </interactant>
    <organismsDiffer>false</organismsDiffer>
    <experiments>3</experiments>
</comment>
<comment type="interaction">
    <interactant intactId="EBI-5916454">
        <id>A6NEM1</id>
    </interactant>
    <interactant intactId="EBI-2557469">
        <id>Q6NYC8</id>
        <label>PPP1R18</label>
    </interactant>
    <organismsDiffer>false</organismsDiffer>
    <experiments>3</experiments>
</comment>
<comment type="interaction">
    <interactant intactId="EBI-5916454">
        <id>A6NEM1</id>
    </interactant>
    <interactant intactId="EBI-1053424">
        <id>O43741</id>
        <label>PRKAB2</label>
    </interactant>
    <organismsDiffer>false</organismsDiffer>
    <experiments>3</experiments>
</comment>
<comment type="interaction">
    <interactant intactId="EBI-5916454">
        <id>A6NEM1</id>
    </interactant>
    <interactant intactId="EBI-2798416">
        <id>Q99633</id>
        <label>PRPF18</label>
    </interactant>
    <organismsDiffer>false</organismsDiffer>
    <experiments>3</experiments>
</comment>
<comment type="interaction">
    <interactant intactId="EBI-5916454">
        <id>A6NEM1</id>
    </interactant>
    <interactant intactId="EBI-1567797">
        <id>Q8WWY3</id>
        <label>PRPF31</label>
    </interactant>
    <organismsDiffer>false</organismsDiffer>
    <experiments>3</experiments>
</comment>
<comment type="interaction">
    <interactant intactId="EBI-5916454">
        <id>A6NEM1</id>
    </interactant>
    <interactant intactId="EBI-10251192">
        <id>Q6NUJ5</id>
        <label>PWWP2B</label>
    </interactant>
    <organismsDiffer>false</organismsDiffer>
    <experiments>3</experiments>
</comment>
<comment type="interaction">
    <interactant intactId="EBI-5916454">
        <id>A6NEM1</id>
    </interactant>
    <interactant intactId="EBI-12028066">
        <id>Q86VV4</id>
        <label>RANBP3L</label>
    </interactant>
    <organismsDiffer>false</organismsDiffer>
    <experiments>3</experiments>
</comment>
<comment type="interaction">
    <interactant intactId="EBI-5916454">
        <id>A6NEM1</id>
    </interactant>
    <interactant intactId="EBI-6912267">
        <id>A6NK89</id>
        <label>RASSF10</label>
    </interactant>
    <organismsDiffer>false</organismsDiffer>
    <experiments>3</experiments>
</comment>
<comment type="interaction">
    <interactant intactId="EBI-5916454">
        <id>A6NEM1</id>
    </interactant>
    <interactant intactId="EBI-366017">
        <id>Q13671</id>
        <label>RIN1</label>
    </interactant>
    <organismsDiffer>false</organismsDiffer>
    <experiments>3</experiments>
</comment>
<comment type="interaction">
    <interactant intactId="EBI-5916454">
        <id>A6NEM1</id>
    </interactant>
    <interactant intactId="EBI-12071382">
        <id>P04808</id>
        <label>RLN1</label>
    </interactant>
    <organismsDiffer>false</organismsDiffer>
    <experiments>3</experiments>
</comment>
<comment type="interaction">
    <interactant intactId="EBI-5916454">
        <id>A6NEM1</id>
    </interactant>
    <interactant intactId="EBI-12235180">
        <id>Q9H2S5</id>
        <label>RNF39</label>
    </interactant>
    <organismsDiffer>false</organismsDiffer>
    <experiments>3</experiments>
</comment>
<comment type="interaction">
    <interactant intactId="EBI-5916454">
        <id>A6NEM1</id>
    </interactant>
    <interactant intactId="EBI-395959">
        <id>Q15287</id>
        <label>RNPS1</label>
    </interactant>
    <organismsDiffer>false</organismsDiffer>
    <experiments>3</experiments>
</comment>
<comment type="interaction">
    <interactant intactId="EBI-5916454">
        <id>A6NEM1</id>
    </interactant>
    <interactant intactId="EBI-10217913">
        <id>Q14D33</id>
        <label>RTP5</label>
    </interactant>
    <organismsDiffer>false</organismsDiffer>
    <experiments>3</experiments>
</comment>
<comment type="interaction">
    <interactant intactId="EBI-5916454">
        <id>A6NEM1</id>
    </interactant>
    <interactant intactId="EBI-745846">
        <id>P57086</id>
        <label>SCAND1</label>
    </interactant>
    <organismsDiffer>false</organismsDiffer>
    <experiments>3</experiments>
</comment>
<comment type="interaction">
    <interactant intactId="EBI-5916454">
        <id>A6NEM1</id>
    </interactant>
    <interactant intactId="EBI-748391">
        <id>Q9BWG6</id>
        <label>SCNM1</label>
    </interactant>
    <organismsDiffer>false</organismsDiffer>
    <experiments>5</experiments>
</comment>
<comment type="interaction">
    <interactant intactId="EBI-5916454">
        <id>A6NEM1</id>
    </interactant>
    <interactant intactId="EBI-747035">
        <id>Q9H788</id>
        <label>SH2D4A</label>
    </interactant>
    <organismsDiffer>false</organismsDiffer>
    <experiments>3</experiments>
</comment>
<comment type="interaction">
    <interactant intactId="EBI-5916454">
        <id>A6NEM1</id>
    </interactant>
    <interactant intactId="EBI-79084">
        <id>Q92529</id>
        <label>SHC3</label>
    </interactant>
    <organismsDiffer>false</organismsDiffer>
    <experiments>3</experiments>
</comment>
<comment type="interaction">
    <interactant intactId="EBI-5916454">
        <id>A6NEM1</id>
    </interactant>
    <interactant intactId="EBI-1050793">
        <id>Q9GZT3</id>
        <label>SLIRP</label>
    </interactant>
    <organismsDiffer>false</organismsDiffer>
    <experiments>3</experiments>
</comment>
<comment type="interaction">
    <interactant intactId="EBI-5916454">
        <id>A6NEM1</id>
    </interactant>
    <interactant intactId="EBI-5457304">
        <id>Q9NSI2</id>
        <label>SLX9</label>
    </interactant>
    <organismsDiffer>false</organismsDiffer>
    <experiments>3</experiments>
</comment>
<comment type="interaction">
    <interactant intactId="EBI-5916454">
        <id>A6NEM1</id>
    </interactant>
    <interactant intactId="EBI-358489">
        <id>Q96GM5</id>
        <label>SMARCD1</label>
    </interactant>
    <organismsDiffer>false</organismsDiffer>
    <experiments>3</experiments>
</comment>
<comment type="interaction">
    <interactant intactId="EBI-5916454">
        <id>A6NEM1</id>
    </interactant>
    <interactant intactId="EBI-455078">
        <id>Q969G3</id>
        <label>SMARCE1</label>
    </interactant>
    <organismsDiffer>false</organismsDiffer>
    <experiments>3</experiments>
</comment>
<comment type="interaction">
    <interactant intactId="EBI-5916454">
        <id>A6NEM1</id>
    </interactant>
    <interactant intactId="EBI-1045459">
        <id>O95863</id>
        <label>SNAI1</label>
    </interactant>
    <organismsDiffer>false</organismsDiffer>
    <experiments>3</experiments>
</comment>
<comment type="interaction">
    <interactant intactId="EBI-5916454">
        <id>A6NEM1</id>
    </interactant>
    <interactant intactId="EBI-12033476">
        <id>O60225-2</id>
        <label>SSX5</label>
    </interactant>
    <organismsDiffer>false</organismsDiffer>
    <experiments>3</experiments>
</comment>
<comment type="interaction">
    <interactant intactId="EBI-5916454">
        <id>A6NEM1</id>
    </interactant>
    <interactant intactId="EBI-745021">
        <id>Q96FJ0</id>
        <label>STAMBPL1</label>
    </interactant>
    <organismsDiffer>false</organismsDiffer>
    <experiments>3</experiments>
</comment>
<comment type="interaction">
    <interactant intactId="EBI-5916454">
        <id>A6NEM1</id>
    </interactant>
    <interactant intactId="EBI-618295">
        <id>O00506</id>
        <label>STK25</label>
    </interactant>
    <organismsDiffer>false</organismsDiffer>
    <experiments>3</experiments>
</comment>
<comment type="interaction">
    <interactant intactId="EBI-5916454">
        <id>A6NEM1</id>
    </interactant>
    <interactant intactId="EBI-3921347">
        <id>P51687</id>
        <label>SUOX</label>
    </interactant>
    <organismsDiffer>false</organismsDiffer>
    <experiments>3</experiments>
</comment>
<comment type="interaction">
    <interactant intactId="EBI-5916454">
        <id>A6NEM1</id>
    </interactant>
    <interactant intactId="EBI-349968">
        <id>O43463</id>
        <label>SUV39H1</label>
    </interactant>
    <organismsDiffer>false</organismsDiffer>
    <experiments>3</experiments>
</comment>
<comment type="interaction">
    <interactant intactId="EBI-5916454">
        <id>A6NEM1</id>
    </interactant>
    <interactant intactId="EBI-11977575">
        <id>Q9H5I1-2</id>
        <label>SUV39H2</label>
    </interactant>
    <organismsDiffer>false</organismsDiffer>
    <experiments>3</experiments>
</comment>
<comment type="interaction">
    <interactant intactId="EBI-5916454">
        <id>A6NEM1</id>
    </interactant>
    <interactant intactId="EBI-747797">
        <id>Q9BSH4</id>
        <label>TACO1</label>
    </interactant>
    <organismsDiffer>false</organismsDiffer>
    <experiments>3</experiments>
</comment>
<comment type="interaction">
    <interactant intactId="EBI-5916454">
        <id>A6NEM1</id>
    </interactant>
    <interactant intactId="EBI-17455779">
        <id>Q9Y2I9-2</id>
        <label>TBC1D30</label>
    </interactant>
    <organismsDiffer>false</organismsDiffer>
    <experiments>3</experiments>
</comment>
<comment type="interaction">
    <interactant intactId="EBI-5916454">
        <id>A6NEM1</id>
    </interactant>
    <interactant intactId="EBI-11955057">
        <id>Q8N8B7-2</id>
        <label>TCEANC</label>
    </interactant>
    <organismsDiffer>false</organismsDiffer>
    <experiments>3</experiments>
</comment>
<comment type="interaction">
    <interactant intactId="EBI-5916454">
        <id>A6NEM1</id>
    </interactant>
    <interactant intactId="EBI-747736">
        <id>Q15561</id>
        <label>TEAD4</label>
    </interactant>
    <organismsDiffer>false</organismsDiffer>
    <experiments>3</experiments>
</comment>
<comment type="interaction">
    <interactant intactId="EBI-5916454">
        <id>A6NEM1</id>
    </interactant>
    <interactant intactId="EBI-741350">
        <id>Q9BT49</id>
        <label>THAP7</label>
    </interactant>
    <organismsDiffer>false</organismsDiffer>
    <experiments>3</experiments>
</comment>
<comment type="interaction">
    <interactant intactId="EBI-5916454">
        <id>A6NEM1</id>
    </interactant>
    <interactant intactId="EBI-2814077">
        <id>Q5JTD0</id>
        <label>TJAP1</label>
    </interactant>
    <organismsDiffer>false</organismsDiffer>
    <experiments>3</experiments>
</comment>
<comment type="interaction">
    <interactant intactId="EBI-5916454">
        <id>A6NEM1</id>
    </interactant>
    <interactant intactId="EBI-11741437">
        <id>Q08117-2</id>
        <label>TLE5</label>
    </interactant>
    <organismsDiffer>false</organismsDiffer>
    <experiments>3</experiments>
</comment>
<comment type="interaction">
    <interactant intactId="EBI-5916454">
        <id>A6NEM1</id>
    </interactant>
    <interactant intactId="EBI-3939165">
        <id>O43711</id>
        <label>TLX3</label>
    </interactant>
    <organismsDiffer>false</organismsDiffer>
    <experiments>3</experiments>
</comment>
<comment type="interaction">
    <interactant intactId="EBI-5916454">
        <id>A6NEM1</id>
    </interactant>
    <interactant intactId="EBI-712598">
        <id>P62328</id>
        <label>TMSB4X</label>
    </interactant>
    <organismsDiffer>false</organismsDiffer>
    <experiments>3</experiments>
</comment>
<comment type="interaction">
    <interactant intactId="EBI-5916454">
        <id>A6NEM1</id>
    </interactant>
    <interactant intactId="EBI-14115717">
        <id>Q8N7U7-2</id>
        <label>TPRX1</label>
    </interactant>
    <organismsDiffer>false</organismsDiffer>
    <experiments>3</experiments>
</comment>
<comment type="interaction">
    <interactant intactId="EBI-5916454">
        <id>A6NEM1</id>
    </interactant>
    <interactant intactId="EBI-765817">
        <id>Q9Y228</id>
        <label>TRAF3IP3</label>
    </interactant>
    <organismsDiffer>false</organismsDiffer>
    <experiments>3</experiments>
</comment>
<comment type="interaction">
    <interactant intactId="EBI-5916454">
        <id>A6NEM1</id>
    </interactant>
    <interactant intactId="EBI-3650647">
        <id>Q9BUZ4</id>
        <label>TRAF4</label>
    </interactant>
    <organismsDiffer>false</organismsDiffer>
    <experiments>3</experiments>
</comment>
<comment type="interaction">
    <interactant intactId="EBI-5916454">
        <id>A6NEM1</id>
    </interactant>
    <interactant intactId="EBI-2820256">
        <id>Q14142</id>
        <label>TRIM14</label>
    </interactant>
    <organismsDiffer>false</organismsDiffer>
    <experiments>3</experiments>
</comment>
<comment type="interaction">
    <interactant intactId="EBI-5916454">
        <id>A6NEM1</id>
    </interactant>
    <interactant intactId="EBI-2559824">
        <id>Q7Z6J9</id>
        <label>TSEN54</label>
    </interactant>
    <organismsDiffer>false</organismsDiffer>
    <experiments>3</experiments>
</comment>
<comment type="interaction">
    <interactant intactId="EBI-5916454">
        <id>A6NEM1</id>
    </interactant>
    <interactant intactId="EBI-1049298">
        <id>P43897</id>
        <label>TSFM</label>
    </interactant>
    <organismsDiffer>false</organismsDiffer>
    <experiments>3</experiments>
</comment>
<comment type="interaction">
    <interactant intactId="EBI-5916454">
        <id>A6NEM1</id>
    </interactant>
    <interactant intactId="EBI-10241197">
        <id>Q3SY00</id>
        <label>TSGA10IP</label>
    </interactant>
    <organismsDiffer>false</organismsDiffer>
    <experiments>3</experiments>
</comment>
<comment type="interaction">
    <interactant intactId="EBI-5916454">
        <id>A6NEM1</id>
    </interactant>
    <interactant intactId="EBI-308511">
        <id>Q9UJ04</id>
        <label>TSPYL4</label>
    </interactant>
    <organismsDiffer>false</organismsDiffer>
    <experiments>3</experiments>
</comment>
<comment type="interaction">
    <interactant intactId="EBI-5916454">
        <id>A6NEM1</id>
    </interactant>
    <interactant intactId="EBI-9090990">
        <id>Q5W5X9-3</id>
        <label>TTC23</label>
    </interactant>
    <organismsDiffer>false</organismsDiffer>
    <experiments>3</experiments>
</comment>
<comment type="interaction">
    <interactant intactId="EBI-5916454">
        <id>A6NEM1</id>
    </interactant>
    <interactant intactId="EBI-2932492">
        <id>Q99757</id>
        <label>TXN2</label>
    </interactant>
    <organismsDiffer>false</organismsDiffer>
    <experiments>3</experiments>
</comment>
<comment type="interaction">
    <interactant intactId="EBI-5916454">
        <id>A6NEM1</id>
    </interactant>
    <interactant intactId="EBI-1383454">
        <id>P29597</id>
        <label>TYK2</label>
    </interactant>
    <organismsDiffer>false</organismsDiffer>
    <experiments>3</experiments>
</comment>
<comment type="interaction">
    <interactant intactId="EBI-5916454">
        <id>A6NEM1</id>
    </interactant>
    <interactant intactId="EBI-7353612">
        <id>P57075-2</id>
        <label>UBASH3A</label>
    </interactant>
    <organismsDiffer>false</organismsDiffer>
    <experiments>3</experiments>
</comment>
<comment type="interaction">
    <interactant intactId="EBI-5916454">
        <id>A6NEM1</id>
    </interactant>
    <interactant intactId="EBI-10267507">
        <id>Q8N7F7</id>
        <label>UBL4B</label>
    </interactant>
    <organismsDiffer>false</organismsDiffer>
    <experiments>3</experiments>
</comment>
<comment type="interaction">
    <interactant intactId="EBI-5916454">
        <id>A6NEM1</id>
    </interactant>
    <interactant intactId="EBI-17208936">
        <id>P0CB47</id>
        <label>UBTFL1</label>
    </interactant>
    <organismsDiffer>false</organismsDiffer>
    <experiments>3</experiments>
</comment>
<comment type="interaction">
    <interactant intactId="EBI-5916454">
        <id>A6NEM1</id>
    </interactant>
    <interactant intactId="EBI-739895">
        <id>Q8N6Y0</id>
        <label>USHBP1</label>
    </interactant>
    <organismsDiffer>false</organismsDiffer>
    <experiments>3</experiments>
</comment>
<comment type="interaction">
    <interactant intactId="EBI-5916454">
        <id>A6NEM1</id>
    </interactant>
    <interactant intactId="EBI-743272">
        <id>O75604</id>
        <label>USP2</label>
    </interactant>
    <organismsDiffer>false</organismsDiffer>
    <experiments>3</experiments>
</comment>
<comment type="interaction">
    <interactant intactId="EBI-5916454">
        <id>A6NEM1</id>
    </interactant>
    <interactant intactId="EBI-11980193">
        <id>Q14119</id>
        <label>VEZF1</label>
    </interactant>
    <organismsDiffer>false</organismsDiffer>
    <experiments>3</experiments>
</comment>
<comment type="interaction">
    <interactant intactId="EBI-5916454">
        <id>A6NEM1</id>
    </interactant>
    <interactant intactId="EBI-12032042">
        <id>Q64LD2-2</id>
        <label>WDR25</label>
    </interactant>
    <organismsDiffer>false</organismsDiffer>
    <experiments>3</experiments>
</comment>
<comment type="interaction">
    <interactant intactId="EBI-5916454">
        <id>A6NEM1</id>
    </interactant>
    <interactant intactId="EBI-711925">
        <id>Q05516</id>
        <label>ZBTB16</label>
    </interactant>
    <organismsDiffer>false</organismsDiffer>
    <experiments>3</experiments>
</comment>
<comment type="interaction">
    <interactant intactId="EBI-5916454">
        <id>A6NEM1</id>
    </interactant>
    <interactant intactId="EBI-744471">
        <id>O43167</id>
        <label>ZBTB24</label>
    </interactant>
    <organismsDiffer>false</organismsDiffer>
    <experiments>3</experiments>
</comment>
<comment type="interaction">
    <interactant intactId="EBI-5916454">
        <id>A6NEM1</id>
    </interactant>
    <interactant intactId="EBI-10237226">
        <id>Q15911-2</id>
        <label>ZFHX3</label>
    </interactant>
    <organismsDiffer>false</organismsDiffer>
    <experiments>3</experiments>
</comment>
<comment type="interaction">
    <interactant intactId="EBI-5916454">
        <id>A6NEM1</id>
    </interactant>
    <interactant intactId="EBI-2555749">
        <id>Q6P2D0</id>
        <label>ZFP1</label>
    </interactant>
    <organismsDiffer>false</organismsDiffer>
    <experiments>3</experiments>
</comment>
<comment type="interaction">
    <interactant intactId="EBI-5916454">
        <id>A6NEM1</id>
    </interactant>
    <interactant intactId="EBI-10183064">
        <id>Q8N5A5-2</id>
        <label>ZGPAT</label>
    </interactant>
    <organismsDiffer>false</organismsDiffer>
    <experiments>3</experiments>
</comment>
<comment type="interaction">
    <interactant intactId="EBI-5916454">
        <id>A6NEM1</id>
    </interactant>
    <interactant intactId="EBI-1965777">
        <id>Q9BRR0</id>
        <label>ZKSCAN3</label>
    </interactant>
    <organismsDiffer>false</organismsDiffer>
    <experiments>3</experiments>
</comment>
<comment type="interaction">
    <interactant intactId="EBI-5916454">
        <id>A6NEM1</id>
    </interactant>
    <interactant intactId="EBI-2682299">
        <id>Q96NC0</id>
        <label>ZMAT2</label>
    </interactant>
    <organismsDiffer>false</organismsDiffer>
    <experiments>3</experiments>
</comment>
<comment type="interaction">
    <interactant intactId="EBI-5916454">
        <id>A6NEM1</id>
    </interactant>
    <interactant intactId="EBI-2555767">
        <id>Q15973</id>
        <label>ZNF124</label>
    </interactant>
    <organismsDiffer>false</organismsDiffer>
    <experiments>3</experiments>
</comment>
<comment type="interaction">
    <interactant intactId="EBI-5916454">
        <id>A6NEM1</id>
    </interactant>
    <interactant intactId="EBI-10747670">
        <id>Q12901</id>
        <label>ZNF155</label>
    </interactant>
    <organismsDiffer>false</organismsDiffer>
    <experiments>3</experiments>
</comment>
<comment type="interaction">
    <interactant intactId="EBI-5916454">
        <id>A6NEM1</id>
    </interactant>
    <interactant intactId="EBI-741694">
        <id>P49910</id>
        <label>ZNF165</label>
    </interactant>
    <organismsDiffer>false</organismsDiffer>
    <experiments>3</experiments>
</comment>
<comment type="interaction">
    <interactant intactId="EBI-5916454">
        <id>A6NEM1</id>
    </interactant>
    <interactant intactId="EBI-1105334">
        <id>P17021</id>
        <label>ZNF17</label>
    </interactant>
    <organismsDiffer>false</organismsDiffer>
    <experiments>3</experiments>
</comment>
<comment type="interaction">
    <interactant intactId="EBI-5916454">
        <id>A6NEM1</id>
    </interactant>
    <interactant intactId="EBI-717634">
        <id>P17024</id>
        <label>ZNF20</label>
    </interactant>
    <organismsDiffer>false</organismsDiffer>
    <experiments>3</experiments>
</comment>
<comment type="interaction">
    <interactant intactId="EBI-5916454">
        <id>A6NEM1</id>
    </interactant>
    <interactant intactId="EBI-747343">
        <id>O95201</id>
        <label>ZNF205</label>
    </interactant>
    <organismsDiffer>false</organismsDiffer>
    <experiments>3</experiments>
</comment>
<comment type="interaction">
    <interactant intactId="EBI-5916454">
        <id>A6NEM1</id>
    </interactant>
    <interactant intactId="EBI-1105361">
        <id>Q9UIE0</id>
        <label>ZNF230</label>
    </interactant>
    <organismsDiffer>false</organismsDiffer>
    <experiments>3</experiments>
</comment>
<comment type="interaction">
    <interactant intactId="EBI-5916454">
        <id>A6NEM1</id>
    </interactant>
    <interactant intactId="EBI-10177272">
        <id>P15622-3</id>
        <label>ZNF250</label>
    </interactant>
    <organismsDiffer>false</organismsDiffer>
    <experiments>3</experiments>
</comment>
<comment type="interaction">
    <interactant intactId="EBI-5916454">
        <id>A6NEM1</id>
    </interactant>
    <interactant intactId="EBI-4395808">
        <id>O43296</id>
        <label>ZNF264</label>
    </interactant>
    <organismsDiffer>false</organismsDiffer>
    <experiments>3</experiments>
</comment>
<comment type="interaction">
    <interactant intactId="EBI-5916454">
        <id>A6NEM1</id>
    </interactant>
    <interactant intactId="EBI-1965483">
        <id>P17041</id>
        <label>ZNF32</label>
    </interactant>
    <organismsDiffer>false</organismsDiffer>
    <experiments>3</experiments>
</comment>
<comment type="interaction">
    <interactant intactId="EBI-5916454">
        <id>A6NEM1</id>
    </interactant>
    <interactant intactId="EBI-7233259">
        <id>Q86UD4</id>
        <label>ZNF329</label>
    </interactant>
    <organismsDiffer>false</organismsDiffer>
    <experiments>3</experiments>
</comment>
<comment type="interaction">
    <interactant intactId="EBI-5916454">
        <id>A6NEM1</id>
    </interactant>
    <interactant intactId="EBI-11041653">
        <id>P13682</id>
        <label>ZNF35</label>
    </interactant>
    <organismsDiffer>false</organismsDiffer>
    <experiments>3</experiments>
</comment>
<comment type="interaction">
    <interactant intactId="EBI-5916454">
        <id>A6NEM1</id>
    </interactant>
    <interactant intactId="EBI-11741890">
        <id>Q86VK4-3</id>
        <label>ZNF410</label>
    </interactant>
    <organismsDiffer>false</organismsDiffer>
    <experiments>3</experiments>
</comment>
<comment type="interaction">
    <interactant intactId="EBI-5916454">
        <id>A6NEM1</id>
    </interactant>
    <interactant intactId="EBI-744257">
        <id>Q96IQ9</id>
        <label>ZNF414</label>
    </interactant>
    <organismsDiffer>false</organismsDiffer>
    <experiments>3</experiments>
</comment>
<comment type="interaction">
    <interactant intactId="EBI-5916454">
        <id>A6NEM1</id>
    </interactant>
    <interactant intactId="EBI-740727">
        <id>Q8TAU3</id>
        <label>ZNF417</label>
    </interactant>
    <organismsDiffer>false</organismsDiffer>
    <experiments>3</experiments>
</comment>
<comment type="interaction">
    <interactant intactId="EBI-5916454">
        <id>A6NEM1</id>
    </interactant>
    <interactant intactId="EBI-11962468">
        <id>Q7Z4V0</id>
        <label>ZNF438</label>
    </interactant>
    <organismsDiffer>false</organismsDiffer>
    <experiments>3</experiments>
</comment>
<comment type="interaction">
    <interactant intactId="EBI-5916454">
        <id>A6NEM1</id>
    </interactant>
    <interactant intactId="EBI-12010736">
        <id>Q8N0Y2-2</id>
        <label>ZNF444</label>
    </interactant>
    <organismsDiffer>false</organismsDiffer>
    <experiments>3</experiments>
</comment>
<comment type="interaction">
    <interactant intactId="EBI-5916454">
        <id>A6NEM1</id>
    </interactant>
    <interactant intactId="EBI-740232">
        <id>Q9NWS9-2</id>
        <label>ZNF446</label>
    </interactant>
    <organismsDiffer>false</organismsDiffer>
    <experiments>3</experiments>
</comment>
<comment type="interaction">
    <interactant intactId="EBI-5916454">
        <id>A6NEM1</id>
    </interactant>
    <interactant intactId="EBI-10820574">
        <id>Q96JC4</id>
        <label>ZNF479</label>
    </interactant>
    <organismsDiffer>false</organismsDiffer>
    <experiments>3</experiments>
</comment>
<comment type="interaction">
    <interactant intactId="EBI-5916454">
        <id>A6NEM1</id>
    </interactant>
    <interactant intactId="EBI-12006434">
        <id>Q96MX3</id>
        <label>ZNF48</label>
    </interactant>
    <organismsDiffer>false</organismsDiffer>
    <experiments>3</experiments>
</comment>
<comment type="interaction">
    <interactant intactId="EBI-5916454">
        <id>A6NEM1</id>
    </interactant>
    <interactant intactId="EBI-1105370">
        <id>Q9ULM2</id>
        <label>ZNF490</label>
    </interactant>
    <organismsDiffer>false</organismsDiffer>
    <experiments>3</experiments>
</comment>
<comment type="interaction">
    <interactant intactId="EBI-5916454">
        <id>A6NEM1</id>
    </interactant>
    <interactant intactId="EBI-10486136">
        <id>Q6ZNH5</id>
        <label>ZNF497</label>
    </interactant>
    <organismsDiffer>false</organismsDiffer>
    <experiments>3</experiments>
</comment>
<comment type="interaction">
    <interactant intactId="EBI-5916454">
        <id>A6NEM1</id>
    </interactant>
    <interactant intactId="EBI-10283126">
        <id>Q96C55</id>
        <label>ZNF524</label>
    </interactant>
    <organismsDiffer>false</organismsDiffer>
    <experiments>3</experiments>
</comment>
<comment type="interaction">
    <interactant intactId="EBI-5916454">
        <id>A6NEM1</id>
    </interactant>
    <interactant intactId="EBI-2555731">
        <id>Q9H707</id>
        <label>ZNF552</label>
    </interactant>
    <organismsDiffer>false</organismsDiffer>
    <experiments>3</experiments>
</comment>
<comment type="interaction">
    <interactant intactId="EBI-5916454">
        <id>A6NEM1</id>
    </interactant>
    <interactant intactId="EBI-10699005">
        <id>Q8N988-2</id>
        <label>ZNF557</label>
    </interactant>
    <organismsDiffer>false</organismsDiffer>
    <experiments>3</experiments>
</comment>
<comment type="interaction">
    <interactant intactId="EBI-5916454">
        <id>A6NEM1</id>
    </interactant>
    <interactant intactId="EBI-17189720">
        <id>Q6ZN55-2</id>
        <label>ZNF574</label>
    </interactant>
    <organismsDiffer>false</organismsDiffer>
    <experiments>3</experiments>
</comment>
<comment type="interaction">
    <interactant intactId="EBI-5916454">
        <id>A6NEM1</id>
    </interactant>
    <interactant intactId="EBI-11955189">
        <id>Q96N58</id>
        <label>ZNF578</label>
    </interactant>
    <organismsDiffer>false</organismsDiffer>
    <experiments>3</experiments>
</comment>
<comment type="interaction">
    <interactant intactId="EBI-5916454">
        <id>A6NEM1</id>
    </interactant>
    <interactant intactId="EBI-746277">
        <id>Q9UK33</id>
        <label>ZNF580</label>
    </interactant>
    <organismsDiffer>false</organismsDiffer>
    <experiments>3</experiments>
</comment>
<comment type="interaction">
    <interactant intactId="EBI-5916454">
        <id>A6NEM1</id>
    </interactant>
    <interactant intactId="EBI-745520">
        <id>Q9P0T4</id>
        <label>ZNF581</label>
    </interactant>
    <organismsDiffer>false</organismsDiffer>
    <experiments>3</experiments>
</comment>
<comment type="interaction">
    <interactant intactId="EBI-5916454">
        <id>A6NEM1</id>
    </interactant>
    <interactant intactId="EBI-6427977">
        <id>Q96SQ5</id>
        <label>ZNF587</label>
    </interactant>
    <organismsDiffer>false</organismsDiffer>
    <experiments>3</experiments>
</comment>
<comment type="interaction">
    <interactant intactId="EBI-5916454">
        <id>A6NEM1</id>
    </interactant>
    <interactant intactId="EBI-8653994">
        <id>Q96NL3</id>
        <label>ZNF599</label>
    </interactant>
    <organismsDiffer>false</organismsDiffer>
    <experiments>3</experiments>
</comment>
<comment type="interaction">
    <interactant intactId="EBI-5916454">
        <id>A6NEM1</id>
    </interactant>
    <interactant intactId="EBI-9116427">
        <id>Q9P2J8</id>
        <label>ZNF624</label>
    </interactant>
    <organismsDiffer>false</organismsDiffer>
    <experiments>3</experiments>
</comment>
<comment type="interaction">
    <interactant intactId="EBI-5916454">
        <id>A6NEM1</id>
    </interactant>
    <interactant intactId="EBI-13086230">
        <id>Q5EBL2</id>
        <label>ZNF628</label>
    </interactant>
    <organismsDiffer>false</organismsDiffer>
    <experiments>3</experiments>
</comment>
<comment type="interaction">
    <interactant intactId="EBI-5916454">
        <id>A6NEM1</id>
    </interactant>
    <interactant intactId="EBI-9977294">
        <id>Q9UEG4</id>
        <label>ZNF629</label>
    </interactant>
    <organismsDiffer>false</organismsDiffer>
    <experiments>3</experiments>
</comment>
<comment type="interaction">
    <interactant intactId="EBI-5916454">
        <id>A6NEM1</id>
    </interactant>
    <interactant intactId="EBI-11985915">
        <id>Q5T619</id>
        <label>ZNF648</label>
    </interactant>
    <organismsDiffer>false</organismsDiffer>
    <experiments>3</experiments>
</comment>
<comment type="interaction">
    <interactant intactId="EBI-5916454">
        <id>A6NEM1</id>
    </interactant>
    <interactant intactId="EBI-12006574">
        <id>Q96BR6</id>
        <label>ZNF669</label>
    </interactant>
    <organismsDiffer>false</organismsDiffer>
    <experiments>3</experiments>
</comment>
<comment type="interaction">
    <interactant intactId="EBI-5916454">
        <id>A6NEM1</id>
    </interactant>
    <interactant intactId="EBI-11090299">
        <id>Q9H7X3</id>
        <label>ZNF696</label>
    </interactant>
    <organismsDiffer>false</organismsDiffer>
    <experiments>3</experiments>
</comment>
<comment type="interaction">
    <interactant intactId="EBI-5916454">
        <id>A6NEM1</id>
    </interactant>
    <interactant intactId="EBI-745775">
        <id>Q96H86</id>
        <label>ZNF764</label>
    </interactant>
    <organismsDiffer>false</organismsDiffer>
    <experiments>3</experiments>
</comment>
<comment type="interaction">
    <interactant intactId="EBI-5916454">
        <id>A6NEM1</id>
    </interactant>
    <interactant intactId="EBI-3925400">
        <id>A8K8V0</id>
        <label>ZNF785</label>
    </interactant>
    <organismsDiffer>false</organismsDiffer>
    <experiments>3</experiments>
</comment>
<comment type="interaction">
    <interactant intactId="EBI-5916454">
        <id>A6NEM1</id>
    </interactant>
    <interactant intactId="EBI-10240849">
        <id>Q3KQV3</id>
        <label>ZNF792</label>
    </interactant>
    <organismsDiffer>false</organismsDiffer>
    <experiments>3</experiments>
</comment>
<comment type="interaction">
    <interactant intactId="EBI-5916454">
        <id>A6NEM1</id>
    </interactant>
    <interactant intactId="EBI-12013828">
        <id>P51504</id>
        <label>ZNF80</label>
    </interactant>
    <organismsDiffer>false</organismsDiffer>
    <experiments>3</experiments>
</comment>
<comment type="interaction">
    <interactant intactId="EBI-5916454">
        <id>A6NEM1</id>
    </interactant>
    <interactant intactId="EBI-5667516">
        <id>Q9Y2P0</id>
        <label>ZNF835</label>
    </interactant>
    <organismsDiffer>false</organismsDiffer>
    <experiments>3</experiments>
</comment>
<comment type="interaction">
    <interactant intactId="EBI-5916454">
        <id>A6NEM1</id>
    </interactant>
    <interactant intactId="EBI-11962574">
        <id>Q96EG3</id>
        <label>ZNF837</label>
    </interactant>
    <organismsDiffer>false</organismsDiffer>
    <experiments>3</experiments>
</comment>
<comment type="interaction">
    <interactant intactId="EBI-5916454">
        <id>A6NEM1</id>
    </interactant>
    <interactant intactId="EBI-10225757">
        <id>Q08AG5</id>
        <label>ZNF844</label>
    </interactant>
    <organismsDiffer>false</organismsDiffer>
    <experiments>3</experiments>
</comment>
<comment type="interaction">
    <interactant intactId="EBI-5916454">
        <id>A6NEM1</id>
    </interactant>
    <interactant intactId="EBI-347522">
        <id>O43257</id>
        <label>ZNHIT1</label>
    </interactant>
    <organismsDiffer>false</organismsDiffer>
    <experiments>3</experiments>
</comment>
<comment type="interaction">
    <interactant intactId="EBI-5916454">
        <id>A6NEM1</id>
    </interactant>
    <interactant intactId="EBI-5667532">
        <id>Q3MJ62</id>
        <label>ZSCAN23</label>
    </interactant>
    <organismsDiffer>false</organismsDiffer>
    <experiments>3</experiments>
</comment>
<comment type="interaction">
    <interactant intactId="EBI-5916454">
        <id>A6NEM1</id>
    </interactant>
    <interactant intactId="EBI-3920053">
        <id>Q16670</id>
        <label>ZSCAN26</label>
    </interactant>
    <organismsDiffer>false</organismsDiffer>
    <experiments>3</experiments>
</comment>
<comment type="interaction">
    <interactant intactId="EBI-5916454">
        <id>A6NEM1</id>
    </interactant>
    <interactant intactId="EBI-25475920">
        <id>PRO_0000449631</id>
        <label>rep</label>
        <dbReference type="UniProtKB" id="P0DTD1"/>
    </interactant>
    <organismsDiffer>true</organismsDiffer>
    <experiments>3</experiments>
</comment>
<comment type="interaction">
    <interactant intactId="EBI-5916454">
        <id>A6NEM1</id>
    </interactant>
    <interactant intactId="EBI-25492395">
        <id>PRO_0000449633</id>
        <label>rep</label>
        <dbReference type="UniProtKB" id="P0DTD1"/>
    </interactant>
    <organismsDiffer>true</organismsDiffer>
    <experiments>3</experiments>
</comment>
<comment type="alternative products">
    <event type="alternative splicing"/>
    <isoform>
        <id>A6NEM1-1</id>
        <name>1</name>
        <sequence type="displayed"/>
    </isoform>
    <isoform>
        <id>A6NEM1-2</id>
        <name>2</name>
        <sequence type="described" ref="VSP_033754"/>
    </isoform>
</comment>
<comment type="similarity">
    <text evidence="4">Belongs to the GOLGA6 family.</text>
</comment>
<feature type="chain" id="PRO_0000334675" description="Golgin subfamily A member 6-like protein 9">
    <location>
        <begin position="1"/>
        <end position="432"/>
    </location>
</feature>
<feature type="region of interest" description="Disordered" evidence="2">
    <location>
        <begin position="1"/>
        <end position="77"/>
    </location>
</feature>
<feature type="region of interest" description="Disordered" evidence="2">
    <location>
        <begin position="349"/>
        <end position="411"/>
    </location>
</feature>
<feature type="coiled-coil region" evidence="1">
    <location>
        <begin position="157"/>
        <end position="354"/>
    </location>
</feature>
<feature type="compositionally biased region" description="Pro residues" evidence="2">
    <location>
        <begin position="1"/>
        <end position="11"/>
    </location>
</feature>
<feature type="compositionally biased region" description="Polar residues" evidence="2">
    <location>
        <begin position="51"/>
        <end position="62"/>
    </location>
</feature>
<feature type="compositionally biased region" description="Basic and acidic residues" evidence="2">
    <location>
        <begin position="349"/>
        <end position="362"/>
    </location>
</feature>
<feature type="compositionally biased region" description="Low complexity" evidence="2">
    <location>
        <begin position="366"/>
        <end position="381"/>
    </location>
</feature>
<feature type="splice variant" id="VSP_033754" description="In isoform 2." evidence="3">
    <location>
        <begin position="1"/>
        <end position="158"/>
    </location>
</feature>
<proteinExistence type="evidence at protein level"/>
<name>GG6L9_HUMAN</name>
<organism>
    <name type="scientific">Homo sapiens</name>
    <name type="common">Human</name>
    <dbReference type="NCBI Taxonomy" id="9606"/>
    <lineage>
        <taxon>Eukaryota</taxon>
        <taxon>Metazoa</taxon>
        <taxon>Chordata</taxon>
        <taxon>Craniata</taxon>
        <taxon>Vertebrata</taxon>
        <taxon>Euteleostomi</taxon>
        <taxon>Mammalia</taxon>
        <taxon>Eutheria</taxon>
        <taxon>Euarchontoglires</taxon>
        <taxon>Primates</taxon>
        <taxon>Haplorrhini</taxon>
        <taxon>Catarrhini</taxon>
        <taxon>Hominidae</taxon>
        <taxon>Homo</taxon>
    </lineage>
</organism>
<gene>
    <name evidence="5" type="primary">GOLGA6L9</name>
    <name evidence="5" type="synonym">GOLGA6L20</name>
</gene>